<dbReference type="EC" id="2.3.1.180" evidence="1"/>
<dbReference type="EMBL" id="BA000019">
    <property type="protein sequence ID" value="BAB77763.1"/>
    <property type="molecule type" value="Genomic_DNA"/>
</dbReference>
<dbReference type="PIR" id="AG1836">
    <property type="entry name" value="AG1836"/>
</dbReference>
<dbReference type="RefSeq" id="WP_010994416.1">
    <property type="nucleotide sequence ID" value="NZ_RSCN01000026.1"/>
</dbReference>
<dbReference type="SMR" id="Q8Z062"/>
<dbReference type="STRING" id="103690.gene:10492246"/>
<dbReference type="KEGG" id="ana:alr0239"/>
<dbReference type="eggNOG" id="COG0332">
    <property type="taxonomic scope" value="Bacteria"/>
</dbReference>
<dbReference type="OrthoDB" id="9815506at2"/>
<dbReference type="UniPathway" id="UPA00094"/>
<dbReference type="Proteomes" id="UP000002483">
    <property type="component" value="Chromosome"/>
</dbReference>
<dbReference type="GO" id="GO:0005737">
    <property type="term" value="C:cytoplasm"/>
    <property type="evidence" value="ECO:0007669"/>
    <property type="project" value="UniProtKB-SubCell"/>
</dbReference>
<dbReference type="GO" id="GO:0004315">
    <property type="term" value="F:3-oxoacyl-[acyl-carrier-protein] synthase activity"/>
    <property type="evidence" value="ECO:0007669"/>
    <property type="project" value="InterPro"/>
</dbReference>
<dbReference type="GO" id="GO:0033818">
    <property type="term" value="F:beta-ketoacyl-acyl-carrier-protein synthase III activity"/>
    <property type="evidence" value="ECO:0007669"/>
    <property type="project" value="UniProtKB-UniRule"/>
</dbReference>
<dbReference type="GO" id="GO:0006633">
    <property type="term" value="P:fatty acid biosynthetic process"/>
    <property type="evidence" value="ECO:0007669"/>
    <property type="project" value="UniProtKB-UniRule"/>
</dbReference>
<dbReference type="CDD" id="cd00830">
    <property type="entry name" value="KAS_III"/>
    <property type="match status" value="1"/>
</dbReference>
<dbReference type="FunFam" id="3.40.47.10:FF:000004">
    <property type="entry name" value="3-oxoacyl-[acyl-carrier-protein] synthase 3"/>
    <property type="match status" value="1"/>
</dbReference>
<dbReference type="Gene3D" id="3.40.47.10">
    <property type="match status" value="1"/>
</dbReference>
<dbReference type="HAMAP" id="MF_01815">
    <property type="entry name" value="FabH"/>
    <property type="match status" value="1"/>
</dbReference>
<dbReference type="InterPro" id="IPR013747">
    <property type="entry name" value="ACP_syn_III_C"/>
</dbReference>
<dbReference type="InterPro" id="IPR013751">
    <property type="entry name" value="ACP_syn_III_N"/>
</dbReference>
<dbReference type="InterPro" id="IPR004655">
    <property type="entry name" value="FabH"/>
</dbReference>
<dbReference type="InterPro" id="IPR016039">
    <property type="entry name" value="Thiolase-like"/>
</dbReference>
<dbReference type="NCBIfam" id="TIGR00747">
    <property type="entry name" value="fabH"/>
    <property type="match status" value="1"/>
</dbReference>
<dbReference type="NCBIfam" id="NF006829">
    <property type="entry name" value="PRK09352.1"/>
    <property type="match status" value="1"/>
</dbReference>
<dbReference type="PANTHER" id="PTHR43091">
    <property type="entry name" value="3-OXOACYL-[ACYL-CARRIER-PROTEIN] SYNTHASE"/>
    <property type="match status" value="1"/>
</dbReference>
<dbReference type="PANTHER" id="PTHR43091:SF1">
    <property type="entry name" value="BETA-KETOACYL-[ACYL-CARRIER-PROTEIN] SYNTHASE III, CHLOROPLASTIC"/>
    <property type="match status" value="1"/>
</dbReference>
<dbReference type="Pfam" id="PF08545">
    <property type="entry name" value="ACP_syn_III"/>
    <property type="match status" value="1"/>
</dbReference>
<dbReference type="Pfam" id="PF08541">
    <property type="entry name" value="ACP_syn_III_C"/>
    <property type="match status" value="1"/>
</dbReference>
<dbReference type="SUPFAM" id="SSF53901">
    <property type="entry name" value="Thiolase-like"/>
    <property type="match status" value="1"/>
</dbReference>
<name>FABH_NOSS1</name>
<evidence type="ECO:0000255" key="1">
    <source>
        <dbReference type="HAMAP-Rule" id="MF_01815"/>
    </source>
</evidence>
<gene>
    <name evidence="1" type="primary">fabH</name>
    <name type="ordered locus">alr0239</name>
</gene>
<organism>
    <name type="scientific">Nostoc sp. (strain PCC 7120 / SAG 25.82 / UTEX 2576)</name>
    <dbReference type="NCBI Taxonomy" id="103690"/>
    <lineage>
        <taxon>Bacteria</taxon>
        <taxon>Bacillati</taxon>
        <taxon>Cyanobacteriota</taxon>
        <taxon>Cyanophyceae</taxon>
        <taxon>Nostocales</taxon>
        <taxon>Nostocaceae</taxon>
        <taxon>Nostoc</taxon>
    </lineage>
</organism>
<keyword id="KW-0012">Acyltransferase</keyword>
<keyword id="KW-0963">Cytoplasm</keyword>
<keyword id="KW-0275">Fatty acid biosynthesis</keyword>
<keyword id="KW-0276">Fatty acid metabolism</keyword>
<keyword id="KW-0444">Lipid biosynthesis</keyword>
<keyword id="KW-0443">Lipid metabolism</keyword>
<keyword id="KW-0511">Multifunctional enzyme</keyword>
<keyword id="KW-1185">Reference proteome</keyword>
<keyword id="KW-0808">Transferase</keyword>
<feature type="chain" id="PRO_0000110391" description="Beta-ketoacyl-[acyl-carrier-protein] synthase III">
    <location>
        <begin position="1"/>
        <end position="330"/>
    </location>
</feature>
<feature type="region of interest" description="ACP-binding" evidence="1">
    <location>
        <begin position="256"/>
        <end position="260"/>
    </location>
</feature>
<feature type="active site" evidence="1">
    <location>
        <position position="114"/>
    </location>
</feature>
<feature type="active site" evidence="1">
    <location>
        <position position="255"/>
    </location>
</feature>
<feature type="active site" evidence="1">
    <location>
        <position position="285"/>
    </location>
</feature>
<comment type="function">
    <text evidence="1">Catalyzes the condensation reaction of fatty acid synthesis by the addition to an acyl acceptor of two carbons from malonyl-ACP. Catalyzes the first condensation reaction which initiates fatty acid synthesis and may therefore play a role in governing the total rate of fatty acid production. Possesses both acetoacetyl-ACP synthase and acetyl transacylase activities. Its substrate specificity determines the biosynthesis of branched-chain and/or straight-chain of fatty acids.</text>
</comment>
<comment type="catalytic activity">
    <reaction evidence="1">
        <text>malonyl-[ACP] + acetyl-CoA + H(+) = 3-oxobutanoyl-[ACP] + CO2 + CoA</text>
        <dbReference type="Rhea" id="RHEA:12080"/>
        <dbReference type="Rhea" id="RHEA-COMP:9623"/>
        <dbReference type="Rhea" id="RHEA-COMP:9625"/>
        <dbReference type="ChEBI" id="CHEBI:15378"/>
        <dbReference type="ChEBI" id="CHEBI:16526"/>
        <dbReference type="ChEBI" id="CHEBI:57287"/>
        <dbReference type="ChEBI" id="CHEBI:57288"/>
        <dbReference type="ChEBI" id="CHEBI:78449"/>
        <dbReference type="ChEBI" id="CHEBI:78450"/>
        <dbReference type="EC" id="2.3.1.180"/>
    </reaction>
</comment>
<comment type="pathway">
    <text evidence="1">Lipid metabolism; fatty acid biosynthesis.</text>
</comment>
<comment type="subunit">
    <text evidence="1">Homodimer.</text>
</comment>
<comment type="subcellular location">
    <subcellularLocation>
        <location evidence="1">Cytoplasm</location>
    </subcellularLocation>
</comment>
<comment type="domain">
    <text evidence="1">The last Arg residue of the ACP-binding site is essential for the weak association between ACP/AcpP and FabH.</text>
</comment>
<comment type="similarity">
    <text evidence="1">Belongs to the thiolase-like superfamily. FabH family.</text>
</comment>
<sequence>MQNLGIAITGSGSAVPETSLHNEELSQLVETSDEWISTRTGIRQRRLALPTESLSSLAAAASRQAIASAGITASDIDLILLATSTPDDLFGTATKIQAELGANKAVAFDLTAACSGFVFGLVTAAQFIRTGVYQNVLLIGADILSRWVDWQDRRTCVLFGDGAGAVVLQANSSDRLLGFALKSDGTQNHYLNLAYQGTAKEILPNVKITQGTYQPVTMNGKEVYRFAAQKVPEIIDKALFEAQLTVDQIDWLLLHQANQRILDTVAQRLNIPAHKVISNLANYGNTSAASIPLALDEAVREGKIKPNDIIATSGFGAGLTWGAAIFQWGR</sequence>
<protein>
    <recommendedName>
        <fullName evidence="1">Beta-ketoacyl-[acyl-carrier-protein] synthase III</fullName>
        <shortName evidence="1">Beta-ketoacyl-ACP synthase III</shortName>
        <shortName evidence="1">KAS III</shortName>
        <ecNumber evidence="1">2.3.1.180</ecNumber>
    </recommendedName>
    <alternativeName>
        <fullName evidence="1">3-oxoacyl-[acyl-carrier-protein] synthase 3</fullName>
    </alternativeName>
    <alternativeName>
        <fullName evidence="1">3-oxoacyl-[acyl-carrier-protein] synthase III</fullName>
    </alternativeName>
</protein>
<proteinExistence type="inferred from homology"/>
<accession>Q8Z062</accession>
<reference key="1">
    <citation type="journal article" date="2001" name="DNA Res.">
        <title>Complete genomic sequence of the filamentous nitrogen-fixing cyanobacterium Anabaena sp. strain PCC 7120.</title>
        <authorList>
            <person name="Kaneko T."/>
            <person name="Nakamura Y."/>
            <person name="Wolk C.P."/>
            <person name="Kuritz T."/>
            <person name="Sasamoto S."/>
            <person name="Watanabe A."/>
            <person name="Iriguchi M."/>
            <person name="Ishikawa A."/>
            <person name="Kawashima K."/>
            <person name="Kimura T."/>
            <person name="Kishida Y."/>
            <person name="Kohara M."/>
            <person name="Matsumoto M."/>
            <person name="Matsuno A."/>
            <person name="Muraki A."/>
            <person name="Nakazaki N."/>
            <person name="Shimpo S."/>
            <person name="Sugimoto M."/>
            <person name="Takazawa M."/>
            <person name="Yamada M."/>
            <person name="Yasuda M."/>
            <person name="Tabata S."/>
        </authorList>
    </citation>
    <scope>NUCLEOTIDE SEQUENCE [LARGE SCALE GENOMIC DNA]</scope>
    <source>
        <strain>PCC 7120 / SAG 25.82 / UTEX 2576</strain>
    </source>
</reference>